<protein>
    <recommendedName>
        <fullName>Paired box protein Pax-9</fullName>
    </recommendedName>
</protein>
<reference key="1">
    <citation type="journal article" date="2006" name="Mol. Biol. Evol.">
        <title>Molecular evolution of the primate developmental genes MSX1 and PAX9.</title>
        <authorList>
            <person name="Perry G.H."/>
            <person name="Verrelli B.C."/>
            <person name="Stone A.C."/>
        </authorList>
    </citation>
    <scope>NUCLEOTIDE SEQUENCE [GENOMIC DNA]</scope>
    <source>
        <strain>Isolate 19935-305</strain>
    </source>
</reference>
<accession>Q2VL61</accession>
<feature type="chain" id="PRO_0000050207" description="Paired box protein Pax-9">
    <location>
        <begin position="1"/>
        <end position="341"/>
    </location>
</feature>
<feature type="DNA-binding region" description="Paired" evidence="2">
    <location>
        <begin position="4"/>
        <end position="130"/>
    </location>
</feature>
<feature type="region of interest" description="PAI subdomain" evidence="2">
    <location>
        <begin position="7"/>
        <end position="63"/>
    </location>
</feature>
<feature type="region of interest" description="RED subdomain" evidence="2">
    <location>
        <begin position="82"/>
        <end position="130"/>
    </location>
</feature>
<feature type="region of interest" description="Interaction with KDM5B" evidence="1">
    <location>
        <begin position="168"/>
        <end position="189"/>
    </location>
</feature>
<organism>
    <name type="scientific">Macaca mulatta</name>
    <name type="common">Rhesus macaque</name>
    <dbReference type="NCBI Taxonomy" id="9544"/>
    <lineage>
        <taxon>Eukaryota</taxon>
        <taxon>Metazoa</taxon>
        <taxon>Chordata</taxon>
        <taxon>Craniata</taxon>
        <taxon>Vertebrata</taxon>
        <taxon>Euteleostomi</taxon>
        <taxon>Mammalia</taxon>
        <taxon>Eutheria</taxon>
        <taxon>Euarchontoglires</taxon>
        <taxon>Primates</taxon>
        <taxon>Haplorrhini</taxon>
        <taxon>Catarrhini</taxon>
        <taxon>Cercopithecidae</taxon>
        <taxon>Cercopithecinae</taxon>
        <taxon>Macaca</taxon>
    </lineage>
</organism>
<name>PAX9_MACMU</name>
<dbReference type="EMBL" id="DQ067510">
    <property type="protein sequence ID" value="AAZ39855.1"/>
    <property type="molecule type" value="Genomic_DNA"/>
</dbReference>
<dbReference type="EMBL" id="DQ067508">
    <property type="protein sequence ID" value="AAZ39855.1"/>
    <property type="status" value="JOINED"/>
    <property type="molecule type" value="Genomic_DNA"/>
</dbReference>
<dbReference type="EMBL" id="DQ067509">
    <property type="protein sequence ID" value="AAZ39855.1"/>
    <property type="status" value="JOINED"/>
    <property type="molecule type" value="Genomic_DNA"/>
</dbReference>
<dbReference type="SMR" id="Q2VL61"/>
<dbReference type="FunCoup" id="Q2VL61">
    <property type="interactions" value="1587"/>
</dbReference>
<dbReference type="STRING" id="9544.ENSMMUP00000012620"/>
<dbReference type="PaxDb" id="9544-ENSMMUP00000012620"/>
<dbReference type="eggNOG" id="KOG3517">
    <property type="taxonomic scope" value="Eukaryota"/>
</dbReference>
<dbReference type="HOGENOM" id="CLU_019281_3_0_1"/>
<dbReference type="InParanoid" id="Q2VL61"/>
<dbReference type="TreeFam" id="TF315397"/>
<dbReference type="Proteomes" id="UP000006718">
    <property type="component" value="Unassembled WGS sequence"/>
</dbReference>
<dbReference type="GO" id="GO:0005634">
    <property type="term" value="C:nucleus"/>
    <property type="evidence" value="ECO:0007669"/>
    <property type="project" value="UniProtKB-SubCell"/>
</dbReference>
<dbReference type="GO" id="GO:0000981">
    <property type="term" value="F:DNA-binding transcription factor activity, RNA polymerase II-specific"/>
    <property type="evidence" value="ECO:0000318"/>
    <property type="project" value="GO_Central"/>
</dbReference>
<dbReference type="GO" id="GO:0000978">
    <property type="term" value="F:RNA polymerase II cis-regulatory region sequence-specific DNA binding"/>
    <property type="evidence" value="ECO:0000318"/>
    <property type="project" value="GO_Central"/>
</dbReference>
<dbReference type="GO" id="GO:0006357">
    <property type="term" value="P:regulation of transcription by RNA polymerase II"/>
    <property type="evidence" value="ECO:0000318"/>
    <property type="project" value="GO_Central"/>
</dbReference>
<dbReference type="CDD" id="cd00131">
    <property type="entry name" value="PAX"/>
    <property type="match status" value="1"/>
</dbReference>
<dbReference type="FunFam" id="1.10.10.10:FF:000003">
    <property type="entry name" value="Paired box protein Pax-6"/>
    <property type="match status" value="1"/>
</dbReference>
<dbReference type="FunFam" id="1.10.10.10:FF:000084">
    <property type="entry name" value="paired box protein Pax-9"/>
    <property type="match status" value="1"/>
</dbReference>
<dbReference type="Gene3D" id="1.10.10.10">
    <property type="entry name" value="Winged helix-like DNA-binding domain superfamily/Winged helix DNA-binding domain"/>
    <property type="match status" value="2"/>
</dbReference>
<dbReference type="InterPro" id="IPR009057">
    <property type="entry name" value="Homeodomain-like_sf"/>
</dbReference>
<dbReference type="InterPro" id="IPR043182">
    <property type="entry name" value="PAIRED_DNA-bd_dom"/>
</dbReference>
<dbReference type="InterPro" id="IPR001523">
    <property type="entry name" value="Paired_dom"/>
</dbReference>
<dbReference type="InterPro" id="IPR043565">
    <property type="entry name" value="PAX_fam"/>
</dbReference>
<dbReference type="InterPro" id="IPR036388">
    <property type="entry name" value="WH-like_DNA-bd_sf"/>
</dbReference>
<dbReference type="PANTHER" id="PTHR45636">
    <property type="entry name" value="PAIRED BOX PROTEIN PAX-6-RELATED-RELATED"/>
    <property type="match status" value="1"/>
</dbReference>
<dbReference type="PANTHER" id="PTHR45636:SF13">
    <property type="entry name" value="PAIRED BOX PROTEIN PAX-9"/>
    <property type="match status" value="1"/>
</dbReference>
<dbReference type="Pfam" id="PF00292">
    <property type="entry name" value="PAX"/>
    <property type="match status" value="1"/>
</dbReference>
<dbReference type="PRINTS" id="PR00027">
    <property type="entry name" value="PAIREDBOX"/>
</dbReference>
<dbReference type="SMART" id="SM00351">
    <property type="entry name" value="PAX"/>
    <property type="match status" value="1"/>
</dbReference>
<dbReference type="SUPFAM" id="SSF46689">
    <property type="entry name" value="Homeodomain-like"/>
    <property type="match status" value="1"/>
</dbReference>
<dbReference type="PROSITE" id="PS00034">
    <property type="entry name" value="PAIRED_1"/>
    <property type="match status" value="1"/>
</dbReference>
<dbReference type="PROSITE" id="PS51057">
    <property type="entry name" value="PAIRED_2"/>
    <property type="match status" value="1"/>
</dbReference>
<evidence type="ECO:0000250" key="1"/>
<evidence type="ECO:0000255" key="2">
    <source>
        <dbReference type="PROSITE-ProRule" id="PRU00381"/>
    </source>
</evidence>
<comment type="function">
    <text evidence="1">Transcription factor required for normal development of thymus, parathyroid glands, ultimobranchial bodies, teeth, skeletal elements of skull and larynx as well as distal limbs.</text>
</comment>
<comment type="subunit">
    <text evidence="1">Interacts with KDM5B.</text>
</comment>
<comment type="subcellular location">
    <subcellularLocation>
        <location>Nucleus</location>
    </subcellularLocation>
</comment>
<sequence>MEPAFGEVNQLGGVFVNGRPLPNAIRLRIVELAQLGIRPCDISRQLRVSHGCVSKILARYNETGSILPGAIGGSKPRVTTPTVVKHIRTYKQRDPGIFAWEIRDRLLADGVCDKYNVPSVSSISRILRNKIGNLAQQGHYDSYKQHQPTPQPALPYNHIYSYPSPITAAAAKVPTPPGVPAIPGSVAMPRTWPSSHSVTDILGIRSITDQVSDSSPYHSPKVEEWSSLGRNNFPATAPHAVNGLEKGVLEQEAKYGQAPNGLPAVGSFVSASSMAPYPTPAQVSPYMTYSAAPSGYVAGHGWQHAGSTPLSPHNCDIPASLAFKGMQAAREGSHSVTASAL</sequence>
<proteinExistence type="inferred from homology"/>
<keyword id="KW-0217">Developmental protein</keyword>
<keyword id="KW-0238">DNA-binding</keyword>
<keyword id="KW-0539">Nucleus</keyword>
<keyword id="KW-0563">Paired box</keyword>
<keyword id="KW-1185">Reference proteome</keyword>
<keyword id="KW-0804">Transcription</keyword>
<keyword id="KW-0805">Transcription regulation</keyword>
<gene>
    <name type="primary">PAX9</name>
</gene>